<evidence type="ECO:0000255" key="1">
    <source>
        <dbReference type="HAMAP-Rule" id="MF_01633"/>
    </source>
</evidence>
<gene>
    <name evidence="1" type="primary">queC</name>
    <name type="ordered locus">GSU0483</name>
</gene>
<dbReference type="EC" id="6.3.4.20" evidence="1"/>
<dbReference type="EMBL" id="AE017180">
    <property type="protein sequence ID" value="AAR33815.1"/>
    <property type="molecule type" value="Genomic_DNA"/>
</dbReference>
<dbReference type="RefSeq" id="NP_951542.1">
    <property type="nucleotide sequence ID" value="NC_002939.5"/>
</dbReference>
<dbReference type="RefSeq" id="WP_010941151.1">
    <property type="nucleotide sequence ID" value="NC_002939.5"/>
</dbReference>
<dbReference type="SMR" id="Q74FW9"/>
<dbReference type="FunCoup" id="Q74FW9">
    <property type="interactions" value="182"/>
</dbReference>
<dbReference type="STRING" id="243231.GSU0483"/>
<dbReference type="DNASU" id="2686136"/>
<dbReference type="EnsemblBacteria" id="AAR33815">
    <property type="protein sequence ID" value="AAR33815"/>
    <property type="gene ID" value="GSU0483"/>
</dbReference>
<dbReference type="KEGG" id="gsu:GSU0483"/>
<dbReference type="PATRIC" id="fig|243231.5.peg.482"/>
<dbReference type="eggNOG" id="COG0603">
    <property type="taxonomic scope" value="Bacteria"/>
</dbReference>
<dbReference type="HOGENOM" id="CLU_081854_1_1_7"/>
<dbReference type="InParanoid" id="Q74FW9"/>
<dbReference type="OrthoDB" id="9789567at2"/>
<dbReference type="UniPathway" id="UPA00391"/>
<dbReference type="Proteomes" id="UP000000577">
    <property type="component" value="Chromosome"/>
</dbReference>
<dbReference type="GO" id="GO:0005524">
    <property type="term" value="F:ATP binding"/>
    <property type="evidence" value="ECO:0007669"/>
    <property type="project" value="UniProtKB-UniRule"/>
</dbReference>
<dbReference type="GO" id="GO:0016879">
    <property type="term" value="F:ligase activity, forming carbon-nitrogen bonds"/>
    <property type="evidence" value="ECO:0007669"/>
    <property type="project" value="UniProtKB-UniRule"/>
</dbReference>
<dbReference type="GO" id="GO:0008270">
    <property type="term" value="F:zinc ion binding"/>
    <property type="evidence" value="ECO:0007669"/>
    <property type="project" value="UniProtKB-UniRule"/>
</dbReference>
<dbReference type="GO" id="GO:0008616">
    <property type="term" value="P:queuosine biosynthetic process"/>
    <property type="evidence" value="ECO:0007669"/>
    <property type="project" value="UniProtKB-UniRule"/>
</dbReference>
<dbReference type="CDD" id="cd01995">
    <property type="entry name" value="QueC-like"/>
    <property type="match status" value="1"/>
</dbReference>
<dbReference type="FunFam" id="3.40.50.620:FF:000131">
    <property type="entry name" value="7-cyano-7-deazaguanine synthase"/>
    <property type="match status" value="1"/>
</dbReference>
<dbReference type="Gene3D" id="3.40.50.620">
    <property type="entry name" value="HUPs"/>
    <property type="match status" value="1"/>
</dbReference>
<dbReference type="HAMAP" id="MF_01633">
    <property type="entry name" value="QueC"/>
    <property type="match status" value="1"/>
</dbReference>
<dbReference type="InterPro" id="IPR018317">
    <property type="entry name" value="QueC"/>
</dbReference>
<dbReference type="InterPro" id="IPR014729">
    <property type="entry name" value="Rossmann-like_a/b/a_fold"/>
</dbReference>
<dbReference type="NCBIfam" id="TIGR00364">
    <property type="entry name" value="7-cyano-7-deazaguanine synthase QueC"/>
    <property type="match status" value="1"/>
</dbReference>
<dbReference type="PANTHER" id="PTHR42914">
    <property type="entry name" value="7-CYANO-7-DEAZAGUANINE SYNTHASE"/>
    <property type="match status" value="1"/>
</dbReference>
<dbReference type="PANTHER" id="PTHR42914:SF1">
    <property type="entry name" value="7-CYANO-7-DEAZAGUANINE SYNTHASE"/>
    <property type="match status" value="1"/>
</dbReference>
<dbReference type="Pfam" id="PF06508">
    <property type="entry name" value="QueC"/>
    <property type="match status" value="1"/>
</dbReference>
<dbReference type="PIRSF" id="PIRSF006293">
    <property type="entry name" value="ExsB"/>
    <property type="match status" value="1"/>
</dbReference>
<dbReference type="SUPFAM" id="SSF52402">
    <property type="entry name" value="Adenine nucleotide alpha hydrolases-like"/>
    <property type="match status" value="1"/>
</dbReference>
<sequence length="237" mass="25160">MTRKAVVLYSGGLDSTTCLAIARAEGFEPHAMSFSYGQRHSVELELAKRNARPAGAVEHMVVEFDLRKVGGSALTADIAVPKEGVGDDIPVTYVPARNTIFLSFALGWAEVLGAFDIFIGVNALDYSGYPDCRPEYISAFETMANLATRVGVEGTGRFRIHAPLMRLTKAEIIRKGLALGVDYGLTHSCYDPSPAGVACGLCDSCRLRLKGFAEVGVADPVPYVTGGQGLGGGKETP</sequence>
<accession>Q74FW9</accession>
<protein>
    <recommendedName>
        <fullName evidence="1">7-cyano-7-deazaguanine synthase</fullName>
        <ecNumber evidence="1">6.3.4.20</ecNumber>
    </recommendedName>
    <alternativeName>
        <fullName evidence="1">7-cyano-7-carbaguanine synthase</fullName>
    </alternativeName>
    <alternativeName>
        <fullName evidence="1">PreQ(0) synthase</fullName>
    </alternativeName>
    <alternativeName>
        <fullName evidence="1">Queuosine biosynthesis protein QueC</fullName>
    </alternativeName>
</protein>
<name>QUEC_GEOSL</name>
<keyword id="KW-0067">ATP-binding</keyword>
<keyword id="KW-0436">Ligase</keyword>
<keyword id="KW-0479">Metal-binding</keyword>
<keyword id="KW-0547">Nucleotide-binding</keyword>
<keyword id="KW-0671">Queuosine biosynthesis</keyword>
<keyword id="KW-1185">Reference proteome</keyword>
<keyword id="KW-0862">Zinc</keyword>
<comment type="function">
    <text evidence="1">Catalyzes the ATP-dependent conversion of 7-carboxy-7-deazaguanine (CDG) to 7-cyano-7-deazaguanine (preQ(0)).</text>
</comment>
<comment type="catalytic activity">
    <reaction evidence="1">
        <text>7-carboxy-7-deazaguanine + NH4(+) + ATP = 7-cyano-7-deazaguanine + ADP + phosphate + H2O + H(+)</text>
        <dbReference type="Rhea" id="RHEA:27982"/>
        <dbReference type="ChEBI" id="CHEBI:15377"/>
        <dbReference type="ChEBI" id="CHEBI:15378"/>
        <dbReference type="ChEBI" id="CHEBI:28938"/>
        <dbReference type="ChEBI" id="CHEBI:30616"/>
        <dbReference type="ChEBI" id="CHEBI:43474"/>
        <dbReference type="ChEBI" id="CHEBI:45075"/>
        <dbReference type="ChEBI" id="CHEBI:61036"/>
        <dbReference type="ChEBI" id="CHEBI:456216"/>
        <dbReference type="EC" id="6.3.4.20"/>
    </reaction>
</comment>
<comment type="cofactor">
    <cofactor evidence="1">
        <name>Zn(2+)</name>
        <dbReference type="ChEBI" id="CHEBI:29105"/>
    </cofactor>
    <text evidence="1">Binds 1 zinc ion per subunit.</text>
</comment>
<comment type="pathway">
    <text evidence="1">Purine metabolism; 7-cyano-7-deazaguanine biosynthesis.</text>
</comment>
<comment type="similarity">
    <text evidence="1">Belongs to the QueC family.</text>
</comment>
<proteinExistence type="inferred from homology"/>
<organism>
    <name type="scientific">Geobacter sulfurreducens (strain ATCC 51573 / DSM 12127 / PCA)</name>
    <dbReference type="NCBI Taxonomy" id="243231"/>
    <lineage>
        <taxon>Bacteria</taxon>
        <taxon>Pseudomonadati</taxon>
        <taxon>Thermodesulfobacteriota</taxon>
        <taxon>Desulfuromonadia</taxon>
        <taxon>Geobacterales</taxon>
        <taxon>Geobacteraceae</taxon>
        <taxon>Geobacter</taxon>
    </lineage>
</organism>
<reference key="1">
    <citation type="journal article" date="2003" name="Science">
        <title>Genome of Geobacter sulfurreducens: metal reduction in subsurface environments.</title>
        <authorList>
            <person name="Methe B.A."/>
            <person name="Nelson K.E."/>
            <person name="Eisen J.A."/>
            <person name="Paulsen I.T."/>
            <person name="Nelson W.C."/>
            <person name="Heidelberg J.F."/>
            <person name="Wu D."/>
            <person name="Wu M."/>
            <person name="Ward N.L."/>
            <person name="Beanan M.J."/>
            <person name="Dodson R.J."/>
            <person name="Madupu R."/>
            <person name="Brinkac L.M."/>
            <person name="Daugherty S.C."/>
            <person name="DeBoy R.T."/>
            <person name="Durkin A.S."/>
            <person name="Gwinn M.L."/>
            <person name="Kolonay J.F."/>
            <person name="Sullivan S.A."/>
            <person name="Haft D.H."/>
            <person name="Selengut J."/>
            <person name="Davidsen T.M."/>
            <person name="Zafar N."/>
            <person name="White O."/>
            <person name="Tran B."/>
            <person name="Romero C."/>
            <person name="Forberger H.A."/>
            <person name="Weidman J.F."/>
            <person name="Khouri H.M."/>
            <person name="Feldblyum T.V."/>
            <person name="Utterback T.R."/>
            <person name="Van Aken S.E."/>
            <person name="Lovley D.R."/>
            <person name="Fraser C.M."/>
        </authorList>
    </citation>
    <scope>NUCLEOTIDE SEQUENCE [LARGE SCALE GENOMIC DNA]</scope>
    <source>
        <strain>ATCC 51573 / DSM 12127 / PCA</strain>
    </source>
</reference>
<feature type="chain" id="PRO_0000246846" description="7-cyano-7-deazaguanine synthase">
    <location>
        <begin position="1"/>
        <end position="237"/>
    </location>
</feature>
<feature type="binding site" evidence="1">
    <location>
        <begin position="9"/>
        <end position="19"/>
    </location>
    <ligand>
        <name>ATP</name>
        <dbReference type="ChEBI" id="CHEBI:30616"/>
    </ligand>
</feature>
<feature type="binding site" evidence="1">
    <location>
        <position position="189"/>
    </location>
    <ligand>
        <name>Zn(2+)</name>
        <dbReference type="ChEBI" id="CHEBI:29105"/>
    </ligand>
</feature>
<feature type="binding site" evidence="1">
    <location>
        <position position="199"/>
    </location>
    <ligand>
        <name>Zn(2+)</name>
        <dbReference type="ChEBI" id="CHEBI:29105"/>
    </ligand>
</feature>
<feature type="binding site" evidence="1">
    <location>
        <position position="202"/>
    </location>
    <ligand>
        <name>Zn(2+)</name>
        <dbReference type="ChEBI" id="CHEBI:29105"/>
    </ligand>
</feature>
<feature type="binding site" evidence="1">
    <location>
        <position position="205"/>
    </location>
    <ligand>
        <name>Zn(2+)</name>
        <dbReference type="ChEBI" id="CHEBI:29105"/>
    </ligand>
</feature>